<proteinExistence type="inferred from homology"/>
<sequence length="139" mass="15718">MDTIGHHYIVEAAGCDPNVIGDANKIREIFLEAAKRGNMEVKASYFFKFSPMGVSGVVIVAESHISVHTWPEKGYAALDVYTCGENADPEKAVDYILEQFKAQYAHVSEIKRGIEEEDRTFTHTILTWEERLDRRNGKP</sequence>
<organism>
    <name type="scientific">Pyrococcus horikoshii (strain ATCC 700860 / DSM 12428 / JCM 9974 / NBRC 100139 / OT-3)</name>
    <dbReference type="NCBI Taxonomy" id="70601"/>
    <lineage>
        <taxon>Archaea</taxon>
        <taxon>Methanobacteriati</taxon>
        <taxon>Methanobacteriota</taxon>
        <taxon>Thermococci</taxon>
        <taxon>Thermococcales</taxon>
        <taxon>Thermococcaceae</taxon>
        <taxon>Pyrococcus</taxon>
    </lineage>
</organism>
<dbReference type="EC" id="4.1.1.50" evidence="1"/>
<dbReference type="EMBL" id="BA000001">
    <property type="protein sequence ID" value="BAA31119.1"/>
    <property type="status" value="ALT_INIT"/>
    <property type="molecule type" value="Genomic_DNA"/>
</dbReference>
<dbReference type="PIR" id="H71215">
    <property type="entry name" value="H71215"/>
</dbReference>
<dbReference type="RefSeq" id="WP_048053533.1">
    <property type="nucleotide sequence ID" value="NC_000961.1"/>
</dbReference>
<dbReference type="SMR" id="O57711"/>
<dbReference type="STRING" id="70601.gene:9379005"/>
<dbReference type="EnsemblBacteria" id="BAA31119">
    <property type="protein sequence ID" value="BAA31119"/>
    <property type="gene ID" value="BAA31119"/>
</dbReference>
<dbReference type="GeneID" id="1442835"/>
<dbReference type="KEGG" id="pho:PH1992"/>
<dbReference type="eggNOG" id="arCOG00279">
    <property type="taxonomic scope" value="Archaea"/>
</dbReference>
<dbReference type="OrthoDB" id="114016at2157"/>
<dbReference type="UniPathway" id="UPA00331">
    <property type="reaction ID" value="UER00451"/>
</dbReference>
<dbReference type="Proteomes" id="UP000000752">
    <property type="component" value="Chromosome"/>
</dbReference>
<dbReference type="GO" id="GO:0005829">
    <property type="term" value="C:cytosol"/>
    <property type="evidence" value="ECO:0007669"/>
    <property type="project" value="TreeGrafter"/>
</dbReference>
<dbReference type="GO" id="GO:0004014">
    <property type="term" value="F:adenosylmethionine decarboxylase activity"/>
    <property type="evidence" value="ECO:0007669"/>
    <property type="project" value="UniProtKB-UniRule"/>
</dbReference>
<dbReference type="GO" id="GO:0008295">
    <property type="term" value="P:spermidine biosynthetic process"/>
    <property type="evidence" value="ECO:0007669"/>
    <property type="project" value="UniProtKB-UniRule"/>
</dbReference>
<dbReference type="FunFam" id="3.30.360.110:FF:000001">
    <property type="entry name" value="S-adenosylmethionine decarboxylase proenzyme"/>
    <property type="match status" value="1"/>
</dbReference>
<dbReference type="Gene3D" id="3.30.160.750">
    <property type="match status" value="1"/>
</dbReference>
<dbReference type="Gene3D" id="3.30.360.110">
    <property type="entry name" value="S-adenosylmethionine decarboxylase domain"/>
    <property type="match status" value="1"/>
</dbReference>
<dbReference type="HAMAP" id="MF_00464">
    <property type="entry name" value="AdoMetDC_1"/>
    <property type="match status" value="1"/>
</dbReference>
<dbReference type="InterPro" id="IPR042286">
    <property type="entry name" value="AdoMetDC_C"/>
</dbReference>
<dbReference type="InterPro" id="IPR003826">
    <property type="entry name" value="AdoMetDC_fam_prok"/>
</dbReference>
<dbReference type="InterPro" id="IPR042284">
    <property type="entry name" value="AdoMetDC_N"/>
</dbReference>
<dbReference type="InterPro" id="IPR016067">
    <property type="entry name" value="S-AdoMet_deCO2ase_core"/>
</dbReference>
<dbReference type="InterPro" id="IPR017716">
    <property type="entry name" value="S-AdoMet_deCOase_pro-enz"/>
</dbReference>
<dbReference type="NCBIfam" id="TIGR03330">
    <property type="entry name" value="SAM_DCase_Bsu"/>
    <property type="match status" value="1"/>
</dbReference>
<dbReference type="PANTHER" id="PTHR33866">
    <property type="entry name" value="S-ADENOSYLMETHIONINE DECARBOXYLASE PROENZYME"/>
    <property type="match status" value="1"/>
</dbReference>
<dbReference type="PANTHER" id="PTHR33866:SF2">
    <property type="entry name" value="S-ADENOSYLMETHIONINE DECARBOXYLASE PROENZYME"/>
    <property type="match status" value="1"/>
</dbReference>
<dbReference type="Pfam" id="PF02675">
    <property type="entry name" value="AdoMet_dc"/>
    <property type="match status" value="1"/>
</dbReference>
<dbReference type="SUPFAM" id="SSF56276">
    <property type="entry name" value="S-adenosylmethionine decarboxylase"/>
    <property type="match status" value="1"/>
</dbReference>
<evidence type="ECO:0000255" key="1">
    <source>
        <dbReference type="HAMAP-Rule" id="MF_00464"/>
    </source>
</evidence>
<evidence type="ECO:0000305" key="2"/>
<name>SPEH_PYRHO</name>
<gene>
    <name evidence="1" type="primary">speH</name>
    <name type="ordered locus">PH1992</name>
</gene>
<reference key="1">
    <citation type="journal article" date="1998" name="DNA Res.">
        <title>Complete sequence and gene organization of the genome of a hyper-thermophilic archaebacterium, Pyrococcus horikoshii OT3.</title>
        <authorList>
            <person name="Kawarabayasi Y."/>
            <person name="Sawada M."/>
            <person name="Horikawa H."/>
            <person name="Haikawa Y."/>
            <person name="Hino Y."/>
            <person name="Yamamoto S."/>
            <person name="Sekine M."/>
            <person name="Baba S."/>
            <person name="Kosugi H."/>
            <person name="Hosoyama A."/>
            <person name="Nagai Y."/>
            <person name="Sakai M."/>
            <person name="Ogura K."/>
            <person name="Otsuka R."/>
            <person name="Nakazawa H."/>
            <person name="Takamiya M."/>
            <person name="Ohfuku Y."/>
            <person name="Funahashi T."/>
            <person name="Tanaka T."/>
            <person name="Kudoh Y."/>
            <person name="Yamazaki J."/>
            <person name="Kushida N."/>
            <person name="Oguchi A."/>
            <person name="Aoki K."/>
            <person name="Yoshizawa T."/>
            <person name="Nakamura Y."/>
            <person name="Robb F.T."/>
            <person name="Horikoshi K."/>
            <person name="Masuchi Y."/>
            <person name="Shizuya H."/>
            <person name="Kikuchi H."/>
        </authorList>
    </citation>
    <scope>NUCLEOTIDE SEQUENCE [LARGE SCALE GENOMIC DNA]</scope>
    <source>
        <strain>ATCC 700860 / DSM 12428 / JCM 9974 / NBRC 100139 / OT-3</strain>
    </source>
</reference>
<protein>
    <recommendedName>
        <fullName evidence="1">S-adenosylmethionine decarboxylase proenzyme</fullName>
        <shortName evidence="1">AdoMetDC</shortName>
        <shortName evidence="1">SAMDC</shortName>
        <ecNumber evidence="1">4.1.1.50</ecNumber>
    </recommendedName>
    <component>
        <recommendedName>
            <fullName evidence="1">S-adenosylmethionine decarboxylase beta chain</fullName>
        </recommendedName>
    </component>
    <component>
        <recommendedName>
            <fullName evidence="1">S-adenosylmethionine decarboxylase alpha chain</fullName>
        </recommendedName>
    </component>
</protein>
<comment type="function">
    <text evidence="1">Catalyzes the decarboxylation of S-adenosylmethionine to S-adenosylmethioninamine (dcAdoMet), the propylamine donor required for the synthesis of the polyamines spermine and spermidine from the diamine putrescine.</text>
</comment>
<comment type="catalytic activity">
    <reaction evidence="1">
        <text>S-adenosyl-L-methionine + H(+) = S-adenosyl 3-(methylsulfanyl)propylamine + CO2</text>
        <dbReference type="Rhea" id="RHEA:15981"/>
        <dbReference type="ChEBI" id="CHEBI:15378"/>
        <dbReference type="ChEBI" id="CHEBI:16526"/>
        <dbReference type="ChEBI" id="CHEBI:57443"/>
        <dbReference type="ChEBI" id="CHEBI:59789"/>
        <dbReference type="EC" id="4.1.1.50"/>
    </reaction>
</comment>
<comment type="cofactor">
    <cofactor evidence="1">
        <name>pyruvate</name>
        <dbReference type="ChEBI" id="CHEBI:15361"/>
    </cofactor>
    <text evidence="1">Binds 1 pyruvoyl group covalently per subunit.</text>
</comment>
<comment type="pathway">
    <text evidence="1">Amine and polyamine biosynthesis; S-adenosylmethioninamine biosynthesis; S-adenosylmethioninamine from S-adenosyl-L-methionine: step 1/1.</text>
</comment>
<comment type="subunit">
    <text evidence="1">Heterotetramer of two alpha and two beta chains arranged as a dimer of alpha/beta heterodimers.</text>
</comment>
<comment type="PTM">
    <text evidence="1">Is synthesized initially as an inactive proenzyme. Formation of the active enzyme involves a self-maturation process in which the active site pyruvoyl group is generated from an internal serine residue via an autocatalytic post-translational modification. Two non-identical subunits are generated from the proenzyme in this reaction, and the pyruvate is formed at the N-terminus of the alpha chain, which is derived from the carboxyl end of the proenzyme. The post-translation cleavage follows an unusual pathway, termed non-hydrolytic serinolysis, in which the side chain hydroxyl group of the serine supplies its oxygen atom to form the C-terminus of the beta chain, while the remainder of the serine residue undergoes an oxidative deamination to produce ammonia and the pyruvoyl group blocking the N-terminus of the alpha chain.</text>
</comment>
<comment type="similarity">
    <text evidence="1">Belongs to the prokaryotic AdoMetDC family. Type 1 subfamily.</text>
</comment>
<comment type="sequence caution" evidence="2">
    <conflict type="erroneous initiation">
        <sequence resource="EMBL-CDS" id="BAA31119"/>
    </conflict>
</comment>
<keyword id="KW-0068">Autocatalytic cleavage</keyword>
<keyword id="KW-0210">Decarboxylase</keyword>
<keyword id="KW-0456">Lyase</keyword>
<keyword id="KW-0620">Polyamine biosynthesis</keyword>
<keyword id="KW-0670">Pyruvate</keyword>
<keyword id="KW-0949">S-adenosyl-L-methionine</keyword>
<keyword id="KW-0704">Schiff base</keyword>
<keyword id="KW-0745">Spermidine biosynthesis</keyword>
<keyword id="KW-0865">Zymogen</keyword>
<feature type="chain" id="PRO_0000030145" description="S-adenosylmethionine decarboxylase beta chain" evidence="1">
    <location>
        <begin position="1"/>
        <end position="62"/>
    </location>
</feature>
<feature type="chain" id="PRO_0000030146" description="S-adenosylmethionine decarboxylase alpha chain" evidence="1">
    <location>
        <begin position="63"/>
        <end position="139"/>
    </location>
</feature>
<feature type="active site" description="Schiff-base intermediate with substrate; via pyruvic acid" evidence="1">
    <location>
        <position position="63"/>
    </location>
</feature>
<feature type="active site" description="Proton acceptor; for processing activity" evidence="1">
    <location>
        <position position="68"/>
    </location>
</feature>
<feature type="active site" description="Proton donor; for catalytic activity" evidence="1">
    <location>
        <position position="83"/>
    </location>
</feature>
<feature type="site" description="Cleavage (non-hydrolytic); by autolysis" evidence="1">
    <location>
        <begin position="62"/>
        <end position="63"/>
    </location>
</feature>
<feature type="modified residue" description="Pyruvic acid (Ser); by autocatalysis" evidence="1">
    <location>
        <position position="63"/>
    </location>
</feature>
<accession>O57711</accession>